<keyword id="KW-0175">Coiled coil</keyword>
<keyword id="KW-0238">DNA-binding</keyword>
<keyword id="KW-0804">Transcription</keyword>
<keyword id="KW-0805">Transcription regulation</keyword>
<feature type="chain" id="PRO_1000034272" description="Transcription elongation factor GreA">
    <location>
        <begin position="1"/>
        <end position="160"/>
    </location>
</feature>
<feature type="coiled-coil region" evidence="1">
    <location>
        <begin position="50"/>
        <end position="70"/>
    </location>
</feature>
<organism>
    <name type="scientific">Legionella pneumophila (strain Lens)</name>
    <dbReference type="NCBI Taxonomy" id="297245"/>
    <lineage>
        <taxon>Bacteria</taxon>
        <taxon>Pseudomonadati</taxon>
        <taxon>Pseudomonadota</taxon>
        <taxon>Gammaproteobacteria</taxon>
        <taxon>Legionellales</taxon>
        <taxon>Legionellaceae</taxon>
        <taxon>Legionella</taxon>
    </lineage>
</organism>
<gene>
    <name evidence="1" type="primary">greA</name>
    <name type="ordered locus">lpl2549</name>
</gene>
<dbReference type="EMBL" id="CR628337">
    <property type="protein sequence ID" value="CAH16789.1"/>
    <property type="molecule type" value="Genomic_DNA"/>
</dbReference>
<dbReference type="RefSeq" id="WP_010948324.1">
    <property type="nucleotide sequence ID" value="NC_006369.1"/>
</dbReference>
<dbReference type="SMR" id="Q5WTH5"/>
<dbReference type="GeneID" id="57036623"/>
<dbReference type="KEGG" id="lpf:lpl2549"/>
<dbReference type="LegioList" id="lpl2549"/>
<dbReference type="HOGENOM" id="CLU_101379_2_0_6"/>
<dbReference type="Proteomes" id="UP000002517">
    <property type="component" value="Chromosome"/>
</dbReference>
<dbReference type="GO" id="GO:0003677">
    <property type="term" value="F:DNA binding"/>
    <property type="evidence" value="ECO:0007669"/>
    <property type="project" value="UniProtKB-UniRule"/>
</dbReference>
<dbReference type="GO" id="GO:0070063">
    <property type="term" value="F:RNA polymerase binding"/>
    <property type="evidence" value="ECO:0007669"/>
    <property type="project" value="InterPro"/>
</dbReference>
<dbReference type="GO" id="GO:0006354">
    <property type="term" value="P:DNA-templated transcription elongation"/>
    <property type="evidence" value="ECO:0007669"/>
    <property type="project" value="TreeGrafter"/>
</dbReference>
<dbReference type="GO" id="GO:0032784">
    <property type="term" value="P:regulation of DNA-templated transcription elongation"/>
    <property type="evidence" value="ECO:0007669"/>
    <property type="project" value="UniProtKB-UniRule"/>
</dbReference>
<dbReference type="FunFam" id="1.10.287.180:FF:000001">
    <property type="entry name" value="Transcription elongation factor GreA"/>
    <property type="match status" value="1"/>
</dbReference>
<dbReference type="FunFam" id="3.10.50.30:FF:000001">
    <property type="entry name" value="Transcription elongation factor GreA"/>
    <property type="match status" value="1"/>
</dbReference>
<dbReference type="Gene3D" id="3.10.50.30">
    <property type="entry name" value="Transcription elongation factor, GreA/GreB, C-terminal domain"/>
    <property type="match status" value="1"/>
</dbReference>
<dbReference type="Gene3D" id="1.10.287.180">
    <property type="entry name" value="Transcription elongation factor, GreA/GreB, N-terminal domain"/>
    <property type="match status" value="1"/>
</dbReference>
<dbReference type="HAMAP" id="MF_00105">
    <property type="entry name" value="GreA_GreB"/>
    <property type="match status" value="1"/>
</dbReference>
<dbReference type="InterPro" id="IPR036953">
    <property type="entry name" value="GreA/GreB_C_sf"/>
</dbReference>
<dbReference type="InterPro" id="IPR018151">
    <property type="entry name" value="TF_GreA/GreB_CS"/>
</dbReference>
<dbReference type="InterPro" id="IPR006359">
    <property type="entry name" value="Tscrpt_elong_fac_GreA"/>
</dbReference>
<dbReference type="InterPro" id="IPR028624">
    <property type="entry name" value="Tscrpt_elong_fac_GreA/B"/>
</dbReference>
<dbReference type="InterPro" id="IPR001437">
    <property type="entry name" value="Tscrpt_elong_fac_GreA/B_C"/>
</dbReference>
<dbReference type="InterPro" id="IPR023459">
    <property type="entry name" value="Tscrpt_elong_fac_GreA/B_fam"/>
</dbReference>
<dbReference type="InterPro" id="IPR022691">
    <property type="entry name" value="Tscrpt_elong_fac_GreA/B_N"/>
</dbReference>
<dbReference type="InterPro" id="IPR036805">
    <property type="entry name" value="Tscrpt_elong_fac_GreA/B_N_sf"/>
</dbReference>
<dbReference type="NCBIfam" id="TIGR01462">
    <property type="entry name" value="greA"/>
    <property type="match status" value="1"/>
</dbReference>
<dbReference type="NCBIfam" id="NF001261">
    <property type="entry name" value="PRK00226.1-2"/>
    <property type="match status" value="1"/>
</dbReference>
<dbReference type="NCBIfam" id="NF001263">
    <property type="entry name" value="PRK00226.1-4"/>
    <property type="match status" value="1"/>
</dbReference>
<dbReference type="NCBIfam" id="NF001264">
    <property type="entry name" value="PRK00226.1-5"/>
    <property type="match status" value="1"/>
</dbReference>
<dbReference type="PANTHER" id="PTHR30437">
    <property type="entry name" value="TRANSCRIPTION ELONGATION FACTOR GREA"/>
    <property type="match status" value="1"/>
</dbReference>
<dbReference type="PANTHER" id="PTHR30437:SF4">
    <property type="entry name" value="TRANSCRIPTION ELONGATION FACTOR GREA"/>
    <property type="match status" value="1"/>
</dbReference>
<dbReference type="Pfam" id="PF01272">
    <property type="entry name" value="GreA_GreB"/>
    <property type="match status" value="1"/>
</dbReference>
<dbReference type="Pfam" id="PF03449">
    <property type="entry name" value="GreA_GreB_N"/>
    <property type="match status" value="1"/>
</dbReference>
<dbReference type="PIRSF" id="PIRSF006092">
    <property type="entry name" value="GreA_GreB"/>
    <property type="match status" value="1"/>
</dbReference>
<dbReference type="SUPFAM" id="SSF54534">
    <property type="entry name" value="FKBP-like"/>
    <property type="match status" value="1"/>
</dbReference>
<dbReference type="SUPFAM" id="SSF46557">
    <property type="entry name" value="GreA transcript cleavage protein, N-terminal domain"/>
    <property type="match status" value="1"/>
</dbReference>
<dbReference type="PROSITE" id="PS00829">
    <property type="entry name" value="GREAB_1"/>
    <property type="match status" value="1"/>
</dbReference>
<dbReference type="PROSITE" id="PS00830">
    <property type="entry name" value="GREAB_2"/>
    <property type="match status" value="1"/>
</dbReference>
<name>GREA_LEGPL</name>
<accession>Q5WTH5</accession>
<sequence>MSKHPMTVEGAEALKAELHRLKFVDRPRIVEAIATARAHGDLKENAEYHAAREQQSFNEGRIQELEAKLSHAQIIDISKLPNNGKVIFGSTVTICHVATGSELTYKIVGEDEADIKLNKISYSSPIARALIGKELDDAVTVETPGGMVEYEIIQVQYIVE</sequence>
<evidence type="ECO:0000255" key="1">
    <source>
        <dbReference type="HAMAP-Rule" id="MF_00105"/>
    </source>
</evidence>
<reference key="1">
    <citation type="journal article" date="2004" name="Nat. Genet.">
        <title>Evidence in the Legionella pneumophila genome for exploitation of host cell functions and high genome plasticity.</title>
        <authorList>
            <person name="Cazalet C."/>
            <person name="Rusniok C."/>
            <person name="Brueggemann H."/>
            <person name="Zidane N."/>
            <person name="Magnier A."/>
            <person name="Ma L."/>
            <person name="Tichit M."/>
            <person name="Jarraud S."/>
            <person name="Bouchier C."/>
            <person name="Vandenesch F."/>
            <person name="Kunst F."/>
            <person name="Etienne J."/>
            <person name="Glaser P."/>
            <person name="Buchrieser C."/>
        </authorList>
    </citation>
    <scope>NUCLEOTIDE SEQUENCE [LARGE SCALE GENOMIC DNA]</scope>
    <source>
        <strain>Lens</strain>
    </source>
</reference>
<proteinExistence type="inferred from homology"/>
<protein>
    <recommendedName>
        <fullName evidence="1">Transcription elongation factor GreA</fullName>
    </recommendedName>
    <alternativeName>
        <fullName evidence="1">Transcript cleavage factor GreA</fullName>
    </alternativeName>
</protein>
<comment type="function">
    <text evidence="1">Necessary for efficient RNA polymerase transcription elongation past template-encoded arresting sites. The arresting sites in DNA have the property of trapping a certain fraction of elongating RNA polymerases that pass through, resulting in locked ternary complexes. Cleavage of the nascent transcript by cleavage factors such as GreA or GreB allows the resumption of elongation from the new 3'terminus. GreA releases sequences of 2 to 3 nucleotides.</text>
</comment>
<comment type="similarity">
    <text evidence="1">Belongs to the GreA/GreB family.</text>
</comment>